<evidence type="ECO:0000255" key="1">
    <source>
        <dbReference type="HAMAP-Rule" id="MF_00476"/>
    </source>
</evidence>
<organism>
    <name type="scientific">Saccharolobus islandicus (strain M.14.25 / Kamchatka #1)</name>
    <name type="common">Sulfolobus islandicus</name>
    <dbReference type="NCBI Taxonomy" id="427317"/>
    <lineage>
        <taxon>Archaea</taxon>
        <taxon>Thermoproteota</taxon>
        <taxon>Thermoprotei</taxon>
        <taxon>Sulfolobales</taxon>
        <taxon>Sulfolobaceae</taxon>
        <taxon>Saccharolobus</taxon>
    </lineage>
</organism>
<name>NIKR_SACI4</name>
<reference key="1">
    <citation type="journal article" date="2009" name="Proc. Natl. Acad. Sci. U.S.A.">
        <title>Biogeography of the Sulfolobus islandicus pan-genome.</title>
        <authorList>
            <person name="Reno M.L."/>
            <person name="Held N.L."/>
            <person name="Fields C.J."/>
            <person name="Burke P.V."/>
            <person name="Whitaker R.J."/>
        </authorList>
    </citation>
    <scope>NUCLEOTIDE SEQUENCE [LARGE SCALE GENOMIC DNA]</scope>
    <source>
        <strain>M.14.25 / Kamchatka #1</strain>
    </source>
</reference>
<dbReference type="EMBL" id="CP001400">
    <property type="protein sequence ID" value="ACP38228.1"/>
    <property type="molecule type" value="Genomic_DNA"/>
</dbReference>
<dbReference type="RefSeq" id="WP_012711473.1">
    <property type="nucleotide sequence ID" value="NC_012588.1"/>
</dbReference>
<dbReference type="SMR" id="C3MW06"/>
<dbReference type="KEGG" id="sia:M1425_1477"/>
<dbReference type="HOGENOM" id="CLU_113319_2_1_2"/>
<dbReference type="Proteomes" id="UP000001350">
    <property type="component" value="Chromosome"/>
</dbReference>
<dbReference type="GO" id="GO:0003677">
    <property type="term" value="F:DNA binding"/>
    <property type="evidence" value="ECO:0007669"/>
    <property type="project" value="UniProtKB-KW"/>
</dbReference>
<dbReference type="GO" id="GO:0003700">
    <property type="term" value="F:DNA-binding transcription factor activity"/>
    <property type="evidence" value="ECO:0007669"/>
    <property type="project" value="UniProtKB-UniRule"/>
</dbReference>
<dbReference type="GO" id="GO:0016151">
    <property type="term" value="F:nickel cation binding"/>
    <property type="evidence" value="ECO:0007669"/>
    <property type="project" value="UniProtKB-UniRule"/>
</dbReference>
<dbReference type="GO" id="GO:0010045">
    <property type="term" value="P:response to nickel cation"/>
    <property type="evidence" value="ECO:0007669"/>
    <property type="project" value="InterPro"/>
</dbReference>
<dbReference type="CDD" id="cd22231">
    <property type="entry name" value="RHH_NikR_HicB-like"/>
    <property type="match status" value="1"/>
</dbReference>
<dbReference type="Gene3D" id="3.30.70.1150">
    <property type="entry name" value="ACT-like. Chain A, domain 2"/>
    <property type="match status" value="1"/>
</dbReference>
<dbReference type="Gene3D" id="1.10.1220.10">
    <property type="entry name" value="Met repressor-like"/>
    <property type="match status" value="1"/>
</dbReference>
<dbReference type="HAMAP" id="MF_00476">
    <property type="entry name" value="NikR"/>
    <property type="match status" value="1"/>
</dbReference>
<dbReference type="InterPro" id="IPR027271">
    <property type="entry name" value="Acetolactate_synth/TF_NikR_C"/>
</dbReference>
<dbReference type="InterPro" id="IPR045865">
    <property type="entry name" value="ACT-like_dom_sf"/>
</dbReference>
<dbReference type="InterPro" id="IPR013321">
    <property type="entry name" value="Arc_rbn_hlx_hlx"/>
</dbReference>
<dbReference type="InterPro" id="IPR002145">
    <property type="entry name" value="CopG"/>
</dbReference>
<dbReference type="InterPro" id="IPR050192">
    <property type="entry name" value="CopG/NikR_regulator"/>
</dbReference>
<dbReference type="InterPro" id="IPR022988">
    <property type="entry name" value="Ni_resp_reg_NikR"/>
</dbReference>
<dbReference type="InterPro" id="IPR010985">
    <property type="entry name" value="Ribbon_hlx_hlx"/>
</dbReference>
<dbReference type="InterPro" id="IPR014864">
    <property type="entry name" value="TF_NikR_Ni-bd_C"/>
</dbReference>
<dbReference type="PANTHER" id="PTHR34719">
    <property type="entry name" value="NICKEL-RESPONSIVE REGULATOR"/>
    <property type="match status" value="1"/>
</dbReference>
<dbReference type="PANTHER" id="PTHR34719:SF2">
    <property type="entry name" value="NICKEL-RESPONSIVE REGULATOR"/>
    <property type="match status" value="1"/>
</dbReference>
<dbReference type="Pfam" id="PF08753">
    <property type="entry name" value="NikR_C"/>
    <property type="match status" value="1"/>
</dbReference>
<dbReference type="Pfam" id="PF01402">
    <property type="entry name" value="RHH_1"/>
    <property type="match status" value="1"/>
</dbReference>
<dbReference type="SUPFAM" id="SSF55021">
    <property type="entry name" value="ACT-like"/>
    <property type="match status" value="1"/>
</dbReference>
<dbReference type="SUPFAM" id="SSF47598">
    <property type="entry name" value="Ribbon-helix-helix"/>
    <property type="match status" value="1"/>
</dbReference>
<accession>C3MW06</accession>
<gene>
    <name type="ordered locus">M1425_1477</name>
</gene>
<proteinExistence type="inferred from homology"/>
<sequence>MSAEKISISLPKELYRELEDFITRKGIPDRSKIFQIALRNYLDENREGTEIIYGIINLVYDHEEASEALTEIQHEYKDNIISTLHLHVNERLCIEAIAVKGEKSKLVELNNRLGQIRGILKARLLISFPYEKT</sequence>
<protein>
    <recommendedName>
        <fullName evidence="1">Putative nickel-responsive regulator</fullName>
    </recommendedName>
</protein>
<feature type="chain" id="PRO_1000206384" description="Putative nickel-responsive regulator">
    <location>
        <begin position="1"/>
        <end position="133"/>
    </location>
</feature>
<feature type="binding site" evidence="1">
    <location>
        <position position="74"/>
    </location>
    <ligand>
        <name>Ni(2+)</name>
        <dbReference type="ChEBI" id="CHEBI:49786"/>
    </ligand>
</feature>
<feature type="binding site" evidence="1">
    <location>
        <position position="85"/>
    </location>
    <ligand>
        <name>Ni(2+)</name>
        <dbReference type="ChEBI" id="CHEBI:49786"/>
    </ligand>
</feature>
<feature type="binding site" evidence="1">
    <location>
        <position position="87"/>
    </location>
    <ligand>
        <name>Ni(2+)</name>
        <dbReference type="ChEBI" id="CHEBI:49786"/>
    </ligand>
</feature>
<feature type="binding site" evidence="1">
    <location>
        <position position="93"/>
    </location>
    <ligand>
        <name>Ni(2+)</name>
        <dbReference type="ChEBI" id="CHEBI:49786"/>
    </ligand>
</feature>
<comment type="function">
    <text evidence="1">Transcriptional regulator.</text>
</comment>
<comment type="cofactor">
    <cofactor evidence="1">
        <name>Ni(2+)</name>
        <dbReference type="ChEBI" id="CHEBI:49786"/>
    </cofactor>
    <text evidence="1">Binds 1 nickel ion per subunit.</text>
</comment>
<comment type="similarity">
    <text evidence="1">Belongs to the transcriptional regulatory CopG/NikR family.</text>
</comment>
<keyword id="KW-0238">DNA-binding</keyword>
<keyword id="KW-0479">Metal-binding</keyword>
<keyword id="KW-0533">Nickel</keyword>
<keyword id="KW-0804">Transcription</keyword>
<keyword id="KW-0805">Transcription regulation</keyword>